<accession>C0QS72</accession>
<keyword id="KW-0021">Allosteric enzyme</keyword>
<keyword id="KW-0963">Cytoplasm</keyword>
<keyword id="KW-0378">Hydrolase</keyword>
<keyword id="KW-0479">Metal-binding</keyword>
<keyword id="KW-0645">Protease</keyword>
<keyword id="KW-1185">Reference proteome</keyword>
<keyword id="KW-0915">Sodium</keyword>
<keyword id="KW-0888">Threonine protease</keyword>
<feature type="chain" id="PRO_1000125413" description="ATP-dependent protease subunit HslV">
    <location>
        <begin position="1"/>
        <end position="177"/>
    </location>
</feature>
<feature type="active site" evidence="1">
    <location>
        <position position="7"/>
    </location>
</feature>
<feature type="binding site" evidence="1">
    <location>
        <position position="162"/>
    </location>
    <ligand>
        <name>Na(+)</name>
        <dbReference type="ChEBI" id="CHEBI:29101"/>
    </ligand>
</feature>
<feature type="binding site" evidence="1">
    <location>
        <position position="165"/>
    </location>
    <ligand>
        <name>Na(+)</name>
        <dbReference type="ChEBI" id="CHEBI:29101"/>
    </ligand>
</feature>
<feature type="binding site" evidence="1">
    <location>
        <position position="168"/>
    </location>
    <ligand>
        <name>Na(+)</name>
        <dbReference type="ChEBI" id="CHEBI:29101"/>
    </ligand>
</feature>
<proteinExistence type="inferred from homology"/>
<protein>
    <recommendedName>
        <fullName evidence="1">ATP-dependent protease subunit HslV</fullName>
        <ecNumber evidence="1">3.4.25.2</ecNumber>
    </recommendedName>
</protein>
<organism>
    <name type="scientific">Persephonella marina (strain DSM 14350 / EX-H1)</name>
    <dbReference type="NCBI Taxonomy" id="123214"/>
    <lineage>
        <taxon>Bacteria</taxon>
        <taxon>Pseudomonadati</taxon>
        <taxon>Aquificota</taxon>
        <taxon>Aquificia</taxon>
        <taxon>Aquificales</taxon>
        <taxon>Hydrogenothermaceae</taxon>
        <taxon>Persephonella</taxon>
    </lineage>
</organism>
<gene>
    <name evidence="1" type="primary">hslV</name>
    <name type="ordered locus">PERMA_1754</name>
</gene>
<dbReference type="EC" id="3.4.25.2" evidence="1"/>
<dbReference type="EMBL" id="CP001230">
    <property type="protein sequence ID" value="ACO03448.1"/>
    <property type="molecule type" value="Genomic_DNA"/>
</dbReference>
<dbReference type="RefSeq" id="WP_012675687.1">
    <property type="nucleotide sequence ID" value="NC_012440.1"/>
</dbReference>
<dbReference type="SMR" id="C0QS72"/>
<dbReference type="STRING" id="123214.PERMA_1754"/>
<dbReference type="PaxDb" id="123214-PERMA_1754"/>
<dbReference type="KEGG" id="pmx:PERMA_1754"/>
<dbReference type="eggNOG" id="COG5405">
    <property type="taxonomic scope" value="Bacteria"/>
</dbReference>
<dbReference type="HOGENOM" id="CLU_093872_1_0_0"/>
<dbReference type="OrthoDB" id="9804884at2"/>
<dbReference type="Proteomes" id="UP000001366">
    <property type="component" value="Chromosome"/>
</dbReference>
<dbReference type="GO" id="GO:0009376">
    <property type="term" value="C:HslUV protease complex"/>
    <property type="evidence" value="ECO:0007669"/>
    <property type="project" value="UniProtKB-UniRule"/>
</dbReference>
<dbReference type="GO" id="GO:0005839">
    <property type="term" value="C:proteasome core complex"/>
    <property type="evidence" value="ECO:0007669"/>
    <property type="project" value="InterPro"/>
</dbReference>
<dbReference type="GO" id="GO:0046872">
    <property type="term" value="F:metal ion binding"/>
    <property type="evidence" value="ECO:0007669"/>
    <property type="project" value="UniProtKB-KW"/>
</dbReference>
<dbReference type="GO" id="GO:0004298">
    <property type="term" value="F:threonine-type endopeptidase activity"/>
    <property type="evidence" value="ECO:0007669"/>
    <property type="project" value="UniProtKB-KW"/>
</dbReference>
<dbReference type="GO" id="GO:0051603">
    <property type="term" value="P:proteolysis involved in protein catabolic process"/>
    <property type="evidence" value="ECO:0007669"/>
    <property type="project" value="InterPro"/>
</dbReference>
<dbReference type="CDD" id="cd01913">
    <property type="entry name" value="protease_HslV"/>
    <property type="match status" value="1"/>
</dbReference>
<dbReference type="FunFam" id="3.60.20.10:FF:000002">
    <property type="entry name" value="ATP-dependent protease subunit HslV"/>
    <property type="match status" value="1"/>
</dbReference>
<dbReference type="Gene3D" id="3.60.20.10">
    <property type="entry name" value="Glutamine Phosphoribosylpyrophosphate, subunit 1, domain 1"/>
    <property type="match status" value="1"/>
</dbReference>
<dbReference type="HAMAP" id="MF_00248">
    <property type="entry name" value="HslV"/>
    <property type="match status" value="1"/>
</dbReference>
<dbReference type="InterPro" id="IPR022281">
    <property type="entry name" value="ATP-dep_Prtase_HsIV_su"/>
</dbReference>
<dbReference type="InterPro" id="IPR029055">
    <property type="entry name" value="Ntn_hydrolases_N"/>
</dbReference>
<dbReference type="InterPro" id="IPR001353">
    <property type="entry name" value="Proteasome_sua/b"/>
</dbReference>
<dbReference type="InterPro" id="IPR023333">
    <property type="entry name" value="Proteasome_suB-type"/>
</dbReference>
<dbReference type="NCBIfam" id="TIGR03692">
    <property type="entry name" value="ATP_dep_HslV"/>
    <property type="match status" value="1"/>
</dbReference>
<dbReference type="NCBIfam" id="NF003964">
    <property type="entry name" value="PRK05456.1"/>
    <property type="match status" value="1"/>
</dbReference>
<dbReference type="PANTHER" id="PTHR32194:SF0">
    <property type="entry name" value="ATP-DEPENDENT PROTEASE SUBUNIT HSLV"/>
    <property type="match status" value="1"/>
</dbReference>
<dbReference type="PANTHER" id="PTHR32194">
    <property type="entry name" value="METALLOPROTEASE TLDD"/>
    <property type="match status" value="1"/>
</dbReference>
<dbReference type="Pfam" id="PF00227">
    <property type="entry name" value="Proteasome"/>
    <property type="match status" value="1"/>
</dbReference>
<dbReference type="PIRSF" id="PIRSF039093">
    <property type="entry name" value="HslV"/>
    <property type="match status" value="1"/>
</dbReference>
<dbReference type="SUPFAM" id="SSF56235">
    <property type="entry name" value="N-terminal nucleophile aminohydrolases (Ntn hydrolases)"/>
    <property type="match status" value="1"/>
</dbReference>
<dbReference type="PROSITE" id="PS51476">
    <property type="entry name" value="PROTEASOME_BETA_2"/>
    <property type="match status" value="1"/>
</dbReference>
<sequence>MSRTKSTTICIVRRDGKTVIAGDGQVTLGNSVMKASARKIRKLYEGKIVVGFAGSAADGLALMERLEEKLNKYRGNLLRAAVELAKDWRTDKFLRRLEAVMVAADKEIMLLISGNGDVIEPDEPVLAIGSGGDYARSAALALYRNTDLSARQIVEEAMKIAGEICIYTNSNITIEEL</sequence>
<reference key="1">
    <citation type="journal article" date="2009" name="J. Bacteriol.">
        <title>Complete and draft genome sequences of six members of the Aquificales.</title>
        <authorList>
            <person name="Reysenbach A.-L."/>
            <person name="Hamamura N."/>
            <person name="Podar M."/>
            <person name="Griffiths E."/>
            <person name="Ferreira S."/>
            <person name="Hochstein R."/>
            <person name="Heidelberg J."/>
            <person name="Johnson J."/>
            <person name="Mead D."/>
            <person name="Pohorille A."/>
            <person name="Sarmiento M."/>
            <person name="Schweighofer K."/>
            <person name="Seshadri R."/>
            <person name="Voytek M.A."/>
        </authorList>
    </citation>
    <scope>NUCLEOTIDE SEQUENCE [LARGE SCALE GENOMIC DNA]</scope>
    <source>
        <strain>DSM 14350 / EX-H1</strain>
    </source>
</reference>
<evidence type="ECO:0000255" key="1">
    <source>
        <dbReference type="HAMAP-Rule" id="MF_00248"/>
    </source>
</evidence>
<name>HSLV_PERMH</name>
<comment type="function">
    <text evidence="1">Protease subunit of a proteasome-like degradation complex believed to be a general protein degrading machinery.</text>
</comment>
<comment type="catalytic activity">
    <reaction evidence="1">
        <text>ATP-dependent cleavage of peptide bonds with broad specificity.</text>
        <dbReference type="EC" id="3.4.25.2"/>
    </reaction>
</comment>
<comment type="activity regulation">
    <text evidence="1">Allosterically activated by HslU binding.</text>
</comment>
<comment type="subunit">
    <text evidence="1">A double ring-shaped homohexamer of HslV is capped on each side by a ring-shaped HslU homohexamer. The assembly of the HslU/HslV complex is dependent on binding of ATP.</text>
</comment>
<comment type="subcellular location">
    <subcellularLocation>
        <location evidence="1">Cytoplasm</location>
    </subcellularLocation>
</comment>
<comment type="similarity">
    <text evidence="1">Belongs to the peptidase T1B family. HslV subfamily.</text>
</comment>